<accession>P48458</accession>
<name>YT91_CAEEL</name>
<dbReference type="EC" id="3.1.3.16"/>
<dbReference type="EMBL" id="Z49886">
    <property type="protein sequence ID" value="CAA90052.1"/>
    <property type="molecule type" value="Genomic_DNA"/>
</dbReference>
<dbReference type="PIR" id="T18972">
    <property type="entry name" value="T18972"/>
</dbReference>
<dbReference type="RefSeq" id="NP_496276.1">
    <property type="nucleotide sequence ID" value="NM_063875.5"/>
</dbReference>
<dbReference type="SMR" id="P48458"/>
<dbReference type="BioGRID" id="39942">
    <property type="interactions" value="1"/>
</dbReference>
<dbReference type="FunCoup" id="P48458">
    <property type="interactions" value="108"/>
</dbReference>
<dbReference type="STRING" id="6239.C06A1.3.1"/>
<dbReference type="PaxDb" id="6239-C06A1.3"/>
<dbReference type="PeptideAtlas" id="P48458"/>
<dbReference type="EnsemblMetazoa" id="C06A1.3.1">
    <property type="protein sequence ID" value="C06A1.3.1"/>
    <property type="gene ID" value="WBGene00007354"/>
</dbReference>
<dbReference type="GeneID" id="174626"/>
<dbReference type="KEGG" id="cel:CELE_C06A1.3"/>
<dbReference type="UCSC" id="C06A1.3">
    <property type="organism name" value="c. elegans"/>
</dbReference>
<dbReference type="AGR" id="WB:WBGene00007354"/>
<dbReference type="CTD" id="174626"/>
<dbReference type="WormBase" id="C06A1.3">
    <property type="protein sequence ID" value="CE02116"/>
    <property type="gene ID" value="WBGene00007354"/>
</dbReference>
<dbReference type="eggNOG" id="KOG0374">
    <property type="taxonomic scope" value="Eukaryota"/>
</dbReference>
<dbReference type="GeneTree" id="ENSGT00970000196438"/>
<dbReference type="HOGENOM" id="CLU_004962_0_0_1"/>
<dbReference type="InParanoid" id="P48458"/>
<dbReference type="OMA" id="LQISFQQ"/>
<dbReference type="OrthoDB" id="5826103at2759"/>
<dbReference type="PhylomeDB" id="P48458"/>
<dbReference type="PRO" id="PR:P48458"/>
<dbReference type="Proteomes" id="UP000001940">
    <property type="component" value="Chromosome II"/>
</dbReference>
<dbReference type="Bgee" id="WBGene00007354">
    <property type="expression patterns" value="Expressed in adult organism and 1 other cell type or tissue"/>
</dbReference>
<dbReference type="GO" id="GO:0005737">
    <property type="term" value="C:cytoplasm"/>
    <property type="evidence" value="ECO:0000318"/>
    <property type="project" value="GO_Central"/>
</dbReference>
<dbReference type="GO" id="GO:0005634">
    <property type="term" value="C:nucleus"/>
    <property type="evidence" value="ECO:0000318"/>
    <property type="project" value="GO_Central"/>
</dbReference>
<dbReference type="GO" id="GO:0046872">
    <property type="term" value="F:metal ion binding"/>
    <property type="evidence" value="ECO:0007669"/>
    <property type="project" value="UniProtKB-KW"/>
</dbReference>
<dbReference type="GO" id="GO:0004722">
    <property type="term" value="F:protein serine/threonine phosphatase activity"/>
    <property type="evidence" value="ECO:0000318"/>
    <property type="project" value="GO_Central"/>
</dbReference>
<dbReference type="FunFam" id="3.60.21.10:FF:000098">
    <property type="entry name" value="Serine/threonine-protein phosphatase"/>
    <property type="match status" value="1"/>
</dbReference>
<dbReference type="Gene3D" id="3.60.21.10">
    <property type="match status" value="1"/>
</dbReference>
<dbReference type="InterPro" id="IPR004843">
    <property type="entry name" value="Calcineurin-like_PHP_ApaH"/>
</dbReference>
<dbReference type="InterPro" id="IPR029052">
    <property type="entry name" value="Metallo-depent_PP-like"/>
</dbReference>
<dbReference type="InterPro" id="IPR050341">
    <property type="entry name" value="PP1_catalytic_subunit"/>
</dbReference>
<dbReference type="InterPro" id="IPR006186">
    <property type="entry name" value="Ser/Thr-sp_prot-phosphatase"/>
</dbReference>
<dbReference type="PANTHER" id="PTHR11668">
    <property type="entry name" value="SERINE/THREONINE PROTEIN PHOSPHATASE"/>
    <property type="match status" value="1"/>
</dbReference>
<dbReference type="PANTHER" id="PTHR11668:SF194">
    <property type="entry name" value="SERINE_THREONINE-PROTEIN PHOSPHATASE-RELATED"/>
    <property type="match status" value="1"/>
</dbReference>
<dbReference type="Pfam" id="PF00149">
    <property type="entry name" value="Metallophos"/>
    <property type="match status" value="1"/>
</dbReference>
<dbReference type="PRINTS" id="PR00114">
    <property type="entry name" value="STPHPHTASE"/>
</dbReference>
<dbReference type="SMART" id="SM00156">
    <property type="entry name" value="PP2Ac"/>
    <property type="match status" value="1"/>
</dbReference>
<dbReference type="SUPFAM" id="SSF56300">
    <property type="entry name" value="Metallo-dependent phosphatases"/>
    <property type="match status" value="1"/>
</dbReference>
<dbReference type="PROSITE" id="PS00125">
    <property type="entry name" value="SER_THR_PHOSPHATASE"/>
    <property type="match status" value="1"/>
</dbReference>
<proteinExistence type="inferred from homology"/>
<comment type="catalytic activity">
    <reaction>
        <text>O-phospho-L-seryl-[protein] + H2O = L-seryl-[protein] + phosphate</text>
        <dbReference type="Rhea" id="RHEA:20629"/>
        <dbReference type="Rhea" id="RHEA-COMP:9863"/>
        <dbReference type="Rhea" id="RHEA-COMP:11604"/>
        <dbReference type="ChEBI" id="CHEBI:15377"/>
        <dbReference type="ChEBI" id="CHEBI:29999"/>
        <dbReference type="ChEBI" id="CHEBI:43474"/>
        <dbReference type="ChEBI" id="CHEBI:83421"/>
        <dbReference type="EC" id="3.1.3.16"/>
    </reaction>
</comment>
<comment type="catalytic activity">
    <reaction>
        <text>O-phospho-L-threonyl-[protein] + H2O = L-threonyl-[protein] + phosphate</text>
        <dbReference type="Rhea" id="RHEA:47004"/>
        <dbReference type="Rhea" id="RHEA-COMP:11060"/>
        <dbReference type="Rhea" id="RHEA-COMP:11605"/>
        <dbReference type="ChEBI" id="CHEBI:15377"/>
        <dbReference type="ChEBI" id="CHEBI:30013"/>
        <dbReference type="ChEBI" id="CHEBI:43474"/>
        <dbReference type="ChEBI" id="CHEBI:61977"/>
        <dbReference type="EC" id="3.1.3.16"/>
    </reaction>
</comment>
<comment type="cofactor">
    <cofactor evidence="1">
        <name>Mn(2+)</name>
        <dbReference type="ChEBI" id="CHEBI:29035"/>
    </cofactor>
    <text evidence="1">Binds 2 manganese ions per subunit.</text>
</comment>
<comment type="similarity">
    <text evidence="3">Belongs to the PPP phosphatase family. PP-1 subfamily.</text>
</comment>
<feature type="chain" id="PRO_0000058915" description="Putative serine/threonine-protein phosphatase C06A1.3">
    <location>
        <begin position="1"/>
        <end position="364"/>
    </location>
</feature>
<feature type="region of interest" description="Disordered" evidence="2">
    <location>
        <begin position="1"/>
        <end position="24"/>
    </location>
</feature>
<feature type="compositionally biased region" description="Basic and acidic residues" evidence="2">
    <location>
        <begin position="11"/>
        <end position="24"/>
    </location>
</feature>
<feature type="active site" description="Proton donor" evidence="1">
    <location>
        <position position="154"/>
    </location>
</feature>
<feature type="binding site" evidence="1">
    <location>
        <position position="93"/>
    </location>
    <ligand>
        <name>Mn(2+)</name>
        <dbReference type="ChEBI" id="CHEBI:29035"/>
        <label>1</label>
    </ligand>
</feature>
<feature type="binding site" evidence="1">
    <location>
        <position position="95"/>
    </location>
    <ligand>
        <name>Mn(2+)</name>
        <dbReference type="ChEBI" id="CHEBI:29035"/>
        <label>1</label>
    </ligand>
</feature>
<feature type="binding site" evidence="1">
    <location>
        <position position="121"/>
    </location>
    <ligand>
        <name>Mn(2+)</name>
        <dbReference type="ChEBI" id="CHEBI:29035"/>
        <label>1</label>
    </ligand>
</feature>
<feature type="binding site" evidence="1">
    <location>
        <position position="121"/>
    </location>
    <ligand>
        <name>Mn(2+)</name>
        <dbReference type="ChEBI" id="CHEBI:29035"/>
        <label>2</label>
    </ligand>
</feature>
<feature type="binding site" evidence="1">
    <location>
        <position position="153"/>
    </location>
    <ligand>
        <name>Mn(2+)</name>
        <dbReference type="ChEBI" id="CHEBI:29035"/>
        <label>2</label>
    </ligand>
</feature>
<feature type="binding site" evidence="1">
    <location>
        <position position="202"/>
    </location>
    <ligand>
        <name>Mn(2+)</name>
        <dbReference type="ChEBI" id="CHEBI:29035"/>
        <label>2</label>
    </ligand>
</feature>
<feature type="binding site" evidence="1">
    <location>
        <position position="277"/>
    </location>
    <ligand>
        <name>Mn(2+)</name>
        <dbReference type="ChEBI" id="CHEBI:29035"/>
        <label>2</label>
    </ligand>
</feature>
<evidence type="ECO:0000250" key="1"/>
<evidence type="ECO:0000256" key="2">
    <source>
        <dbReference type="SAM" id="MobiDB-lite"/>
    </source>
</evidence>
<evidence type="ECO:0000305" key="3"/>
<organism>
    <name type="scientific">Caenorhabditis elegans</name>
    <dbReference type="NCBI Taxonomy" id="6239"/>
    <lineage>
        <taxon>Eukaryota</taxon>
        <taxon>Metazoa</taxon>
        <taxon>Ecdysozoa</taxon>
        <taxon>Nematoda</taxon>
        <taxon>Chromadorea</taxon>
        <taxon>Rhabditida</taxon>
        <taxon>Rhabditina</taxon>
        <taxon>Rhabditomorpha</taxon>
        <taxon>Rhabditoidea</taxon>
        <taxon>Rhabditidae</taxon>
        <taxon>Peloderinae</taxon>
        <taxon>Caenorhabditis</taxon>
    </lineage>
</organism>
<keyword id="KW-0378">Hydrolase</keyword>
<keyword id="KW-0464">Manganese</keyword>
<keyword id="KW-0479">Metal-binding</keyword>
<keyword id="KW-0904">Protein phosphatase</keyword>
<keyword id="KW-1185">Reference proteome</keyword>
<reference key="1">
    <citation type="journal article" date="1998" name="Science">
        <title>Genome sequence of the nematode C. elegans: a platform for investigating biology.</title>
        <authorList>
            <consortium name="The C. elegans sequencing consortium"/>
        </authorList>
    </citation>
    <scope>NUCLEOTIDE SEQUENCE [LARGE SCALE GENOMIC DNA]</scope>
    <source>
        <strain>Bristol N2</strain>
    </source>
</reference>
<sequence length="364" mass="41208">MSTDGNNNKKGSKEGPKSSEISKFDLAKENPKLAEWMDDCIKRMNSLYKDTNINICNVMTGHEIISIIRMVEAIFMEESNLCEAEAPIKVIGDIHAQYQDMNRLFDLIGRVPEEKLMFLGDYVDRGPQGIEVLILLFCLKIRYRDRIYLLRGNHETPSVNKIYGFYVECQYKYGIGLWWDFQSCFNRMPMSGLISKRVLCMHGGLSPELINLDTIRNIPRPCEPLDRGLLIDLLWSDPTNKGEGWFHSIRGISYMFGKGVVEQACKSLEIDLIIRAHQVVQDGYEMMTGRRLITVFSVPNYCAQFTNAAAVVCLNANLQISFQQMIPPPLPEGTKAKAAPAIAIDPNIDAARADKDAIKPFVKE</sequence>
<protein>
    <recommendedName>
        <fullName>Putative serine/threonine-protein phosphatase C06A1.3</fullName>
        <ecNumber>3.1.3.16</ecNumber>
    </recommendedName>
</protein>
<gene>
    <name type="ORF">C06A1.3</name>
</gene>